<protein>
    <recommendedName>
        <fullName evidence="1">Large ribosomal subunit protein uL15</fullName>
    </recommendedName>
    <alternativeName>
        <fullName evidence="3">50S ribosomal protein L15</fullName>
    </alternativeName>
</protein>
<gene>
    <name evidence="1" type="primary">rplO</name>
    <name type="synonym">rpl15</name>
    <name type="ordered locus">SYNW2084</name>
</gene>
<reference key="1">
    <citation type="journal article" date="2003" name="Nature">
        <title>The genome of a motile marine Synechococcus.</title>
        <authorList>
            <person name="Palenik B."/>
            <person name="Brahamsha B."/>
            <person name="Larimer F.W."/>
            <person name="Land M.L."/>
            <person name="Hauser L."/>
            <person name="Chain P."/>
            <person name="Lamerdin J.E."/>
            <person name="Regala W."/>
            <person name="Allen E.E."/>
            <person name="McCarren J."/>
            <person name="Paulsen I.T."/>
            <person name="Dufresne A."/>
            <person name="Partensky F."/>
            <person name="Webb E.A."/>
            <person name="Waterbury J."/>
        </authorList>
    </citation>
    <scope>NUCLEOTIDE SEQUENCE [LARGE SCALE GENOMIC DNA]</scope>
    <source>
        <strain>WH8102</strain>
    </source>
</reference>
<sequence length="152" mass="16195">MTTLRLESLKANKGARRRKLRKGRGIAAGQGASCGFGMRGQKSRSGRPTRPGFEGGQMPLYRRVPKLKHFPLVNPKHFTVLNVSALNSLKDGSTVNLDSLVKDGVVTSPKHPLKILGNGDLTAKKLTVQAAAFTASARTKIEAAGGSCETLD</sequence>
<name>RL15_PARMW</name>
<dbReference type="EMBL" id="BX569694">
    <property type="protein sequence ID" value="CAE08599.1"/>
    <property type="molecule type" value="Genomic_DNA"/>
</dbReference>
<dbReference type="RefSeq" id="WP_011128942.1">
    <property type="nucleotide sequence ID" value="NC_005070.1"/>
</dbReference>
<dbReference type="SMR" id="Q7U4I3"/>
<dbReference type="STRING" id="84588.SYNW2084"/>
<dbReference type="KEGG" id="syw:SYNW2084"/>
<dbReference type="eggNOG" id="COG0200">
    <property type="taxonomic scope" value="Bacteria"/>
</dbReference>
<dbReference type="HOGENOM" id="CLU_055188_4_1_3"/>
<dbReference type="Proteomes" id="UP000001422">
    <property type="component" value="Chromosome"/>
</dbReference>
<dbReference type="GO" id="GO:0022625">
    <property type="term" value="C:cytosolic large ribosomal subunit"/>
    <property type="evidence" value="ECO:0007669"/>
    <property type="project" value="TreeGrafter"/>
</dbReference>
<dbReference type="GO" id="GO:0019843">
    <property type="term" value="F:rRNA binding"/>
    <property type="evidence" value="ECO:0007669"/>
    <property type="project" value="UniProtKB-UniRule"/>
</dbReference>
<dbReference type="GO" id="GO:0003735">
    <property type="term" value="F:structural constituent of ribosome"/>
    <property type="evidence" value="ECO:0007669"/>
    <property type="project" value="InterPro"/>
</dbReference>
<dbReference type="GO" id="GO:0006412">
    <property type="term" value="P:translation"/>
    <property type="evidence" value="ECO:0007669"/>
    <property type="project" value="UniProtKB-UniRule"/>
</dbReference>
<dbReference type="Gene3D" id="3.100.10.10">
    <property type="match status" value="1"/>
</dbReference>
<dbReference type="HAMAP" id="MF_01341">
    <property type="entry name" value="Ribosomal_uL15"/>
    <property type="match status" value="1"/>
</dbReference>
<dbReference type="InterPro" id="IPR030878">
    <property type="entry name" value="Ribosomal_uL15"/>
</dbReference>
<dbReference type="InterPro" id="IPR021131">
    <property type="entry name" value="Ribosomal_uL15/eL18"/>
</dbReference>
<dbReference type="InterPro" id="IPR036227">
    <property type="entry name" value="Ribosomal_uL15/eL18_sf"/>
</dbReference>
<dbReference type="InterPro" id="IPR005749">
    <property type="entry name" value="Ribosomal_uL15_bac-type"/>
</dbReference>
<dbReference type="InterPro" id="IPR001196">
    <property type="entry name" value="Ribosomal_uL15_CS"/>
</dbReference>
<dbReference type="NCBIfam" id="TIGR01071">
    <property type="entry name" value="rplO_bact"/>
    <property type="match status" value="1"/>
</dbReference>
<dbReference type="PANTHER" id="PTHR12934">
    <property type="entry name" value="50S RIBOSOMAL PROTEIN L15"/>
    <property type="match status" value="1"/>
</dbReference>
<dbReference type="PANTHER" id="PTHR12934:SF11">
    <property type="entry name" value="LARGE RIBOSOMAL SUBUNIT PROTEIN UL15M"/>
    <property type="match status" value="1"/>
</dbReference>
<dbReference type="Pfam" id="PF00828">
    <property type="entry name" value="Ribosomal_L27A"/>
    <property type="match status" value="1"/>
</dbReference>
<dbReference type="SUPFAM" id="SSF52080">
    <property type="entry name" value="Ribosomal proteins L15p and L18e"/>
    <property type="match status" value="1"/>
</dbReference>
<dbReference type="PROSITE" id="PS00475">
    <property type="entry name" value="RIBOSOMAL_L15"/>
    <property type="match status" value="1"/>
</dbReference>
<comment type="function">
    <text evidence="1">Binds to the 23S rRNA.</text>
</comment>
<comment type="subunit">
    <text evidence="1">Part of the 50S ribosomal subunit.</text>
</comment>
<comment type="similarity">
    <text evidence="1">Belongs to the universal ribosomal protein uL15 family.</text>
</comment>
<keyword id="KW-0687">Ribonucleoprotein</keyword>
<keyword id="KW-0689">Ribosomal protein</keyword>
<keyword id="KW-0694">RNA-binding</keyword>
<keyword id="KW-0699">rRNA-binding</keyword>
<proteinExistence type="inferred from homology"/>
<feature type="chain" id="PRO_0000104839" description="Large ribosomal subunit protein uL15">
    <location>
        <begin position="1"/>
        <end position="152"/>
    </location>
</feature>
<feature type="region of interest" description="Disordered" evidence="2">
    <location>
        <begin position="31"/>
        <end position="58"/>
    </location>
</feature>
<organism>
    <name type="scientific">Parasynechococcus marenigrum (strain WH8102)</name>
    <dbReference type="NCBI Taxonomy" id="84588"/>
    <lineage>
        <taxon>Bacteria</taxon>
        <taxon>Bacillati</taxon>
        <taxon>Cyanobacteriota</taxon>
        <taxon>Cyanophyceae</taxon>
        <taxon>Synechococcales</taxon>
        <taxon>Prochlorococcaceae</taxon>
        <taxon>Parasynechococcus</taxon>
        <taxon>Parasynechococcus marenigrum</taxon>
    </lineage>
</organism>
<evidence type="ECO:0000255" key="1">
    <source>
        <dbReference type="HAMAP-Rule" id="MF_01341"/>
    </source>
</evidence>
<evidence type="ECO:0000256" key="2">
    <source>
        <dbReference type="SAM" id="MobiDB-lite"/>
    </source>
</evidence>
<evidence type="ECO:0000305" key="3"/>
<accession>Q7U4I3</accession>